<keyword id="KW-0456">Lyase</keyword>
<keyword id="KW-1185">Reference proteome</keyword>
<proteinExistence type="inferred from homology"/>
<reference key="1">
    <citation type="journal article" date="2013" name="Nature">
        <title>Pan genome of the phytoplankton Emiliania underpins its global distribution.</title>
        <authorList>
            <person name="Read B.A."/>
            <person name="Kegel J."/>
            <person name="Klute M.J."/>
            <person name="Kuo A."/>
            <person name="Lefebvre S.C."/>
            <person name="Maumus F."/>
            <person name="Mayer C."/>
            <person name="Miller J."/>
            <person name="Monier A."/>
            <person name="Salamov A."/>
            <person name="Young J."/>
            <person name="Aguilar M."/>
            <person name="Claverie J.M."/>
            <person name="Frickenhaus S."/>
            <person name="Gonzalez K."/>
            <person name="Herman E.K."/>
            <person name="Lin Y.C."/>
            <person name="Napier J."/>
            <person name="Ogata H."/>
            <person name="Sarno A.F."/>
            <person name="Shmutz J."/>
            <person name="Schroeder D."/>
            <person name="de Vargas C."/>
            <person name="Verret F."/>
            <person name="von Dassow P."/>
            <person name="Valentin K."/>
            <person name="Van de Peer Y."/>
            <person name="Wheeler G."/>
            <person name="Dacks J.B."/>
            <person name="Delwiche C.F."/>
            <person name="Dyhrman S.T."/>
            <person name="Glockner G."/>
            <person name="John U."/>
            <person name="Richards T."/>
            <person name="Worden A.Z."/>
            <person name="Zhang X."/>
            <person name="Grigoriev I.V."/>
            <person name="Allen A.E."/>
            <person name="Bidle K."/>
            <person name="Borodovsky M."/>
            <person name="Bowler C."/>
            <person name="Brownlee C."/>
            <person name="Cock J.M."/>
            <person name="Elias M."/>
            <person name="Gladyshev V.N."/>
            <person name="Groth M."/>
            <person name="Guda C."/>
            <person name="Hadaegh A."/>
            <person name="Iglesias-Rodriguez M.D."/>
            <person name="Jenkins J."/>
            <person name="Jones B.M."/>
            <person name="Lawson T."/>
            <person name="Leese F."/>
            <person name="Lindquist E."/>
            <person name="Lobanov A."/>
            <person name="Lomsadze A."/>
            <person name="Malik S.B."/>
            <person name="Marsh M.E."/>
            <person name="Mackinder L."/>
            <person name="Mock T."/>
            <person name="Mueller-Roeber B."/>
            <person name="Pagarete A."/>
            <person name="Parker M."/>
            <person name="Probert I."/>
            <person name="Quesneville H."/>
            <person name="Raines C."/>
            <person name="Rensing S.A."/>
            <person name="Riano-Pachon D.M."/>
            <person name="Richier S."/>
            <person name="Rokitta S."/>
            <person name="Shiraiwa Y."/>
            <person name="Soanes D.M."/>
            <person name="van der Giezen M."/>
            <person name="Wahlund T.M."/>
            <person name="Williams B."/>
            <person name="Wilson W."/>
            <person name="Wolfe G."/>
            <person name="Wurch L.L."/>
        </authorList>
    </citation>
    <scope>NUCLEOTIDE SEQUENCE [LARGE SCALE GENOMIC DNA]</scope>
    <source>
        <strain>CCMP1516</strain>
    </source>
</reference>
<reference key="2">
    <citation type="journal article" date="2015" name="Science">
        <title>Identification of the algal dimethyl sulfide-releasing enzyme: A missing link in the marine sulfur cycle.</title>
        <authorList>
            <person name="Alcolombri U."/>
            <person name="Ben-Dor S."/>
            <person name="Feldmesser E."/>
            <person name="Levin Y."/>
            <person name="Tawfik D.S."/>
            <person name="Vardi A."/>
        </authorList>
    </citation>
    <scope>IDENTIFICATION</scope>
</reference>
<protein>
    <recommendedName>
        <fullName evidence="4">Dimethylsulfoniopropionate lyase 7</fullName>
        <shortName evidence="4">DMSP lyase 7</shortName>
        <ecNumber evidence="1">4.4.1.3</ecNumber>
    </recommendedName>
    <alternativeName>
        <fullName evidence="4">Dimethylpropiothetin dethiomethylase 7</fullName>
    </alternativeName>
</protein>
<dbReference type="EC" id="4.4.1.3" evidence="1"/>
<dbReference type="EMBL" id="KB865129">
    <property type="protein sequence ID" value="EOD26887.1"/>
    <property type="molecule type" value="Genomic_DNA"/>
</dbReference>
<dbReference type="RefSeq" id="XP_005779316.1">
    <property type="nucleotide sequence ID" value="XM_005779259.1"/>
</dbReference>
<dbReference type="SMR" id="R1CW23"/>
<dbReference type="PaxDb" id="2903-EOD26887"/>
<dbReference type="EnsemblProtists" id="EOD26887">
    <property type="protein sequence ID" value="EOD26887"/>
    <property type="gene ID" value="EMIHUDRAFT_114859"/>
</dbReference>
<dbReference type="GeneID" id="17272432"/>
<dbReference type="KEGG" id="ehx:EMIHUDRAFT_114859"/>
<dbReference type="eggNOG" id="ENOG502RZWQ">
    <property type="taxonomic scope" value="Eukaryota"/>
</dbReference>
<dbReference type="HOGENOM" id="CLU_722474_0_0_1"/>
<dbReference type="Proteomes" id="UP000013827">
    <property type="component" value="Unassembled WGS sequence"/>
</dbReference>
<dbReference type="GO" id="GO:0047869">
    <property type="term" value="F:dimethylpropiothetin dethiomethylase activity"/>
    <property type="evidence" value="ECO:0007669"/>
    <property type="project" value="UniProtKB-EC"/>
</dbReference>
<evidence type="ECO:0000250" key="1">
    <source>
        <dbReference type="UniProtKB" id="P0DN21"/>
    </source>
</evidence>
<evidence type="ECO:0000256" key="2">
    <source>
        <dbReference type="SAM" id="MobiDB-lite"/>
    </source>
</evidence>
<evidence type="ECO:0000303" key="3">
    <source>
    </source>
</evidence>
<evidence type="ECO:0000305" key="4"/>
<evidence type="ECO:0000312" key="5">
    <source>
        <dbReference type="EMBL" id="EOD26887.1"/>
    </source>
</evidence>
<comment type="function">
    <text evidence="1">Mediates cleavage of dimethylsulfoniopropionate (DMSP) into dimethyl sulfide (DMS) and acrylate. DMS is the principal form by which sulfur is transported from oceans to the atmosphere and is a key component of the ocean sulfur cycle.</text>
</comment>
<comment type="catalytic activity">
    <reaction evidence="1">
        <text>S,S-dimethyl-beta-propiothetin = acrylate + dimethyl sulfide + H(+)</text>
        <dbReference type="Rhea" id="RHEA:19965"/>
        <dbReference type="ChEBI" id="CHEBI:15378"/>
        <dbReference type="ChEBI" id="CHEBI:16457"/>
        <dbReference type="ChEBI" id="CHEBI:17437"/>
        <dbReference type="ChEBI" id="CHEBI:37080"/>
        <dbReference type="EC" id="4.4.1.3"/>
    </reaction>
</comment>
<comment type="subunit">
    <text evidence="1">Homotetramer.</text>
</comment>
<comment type="similarity">
    <text evidence="4">Belongs to the aspartate/glutamate racemases family. ALMA1 subfamily.</text>
</comment>
<gene>
    <name evidence="3" type="primary">ALMA7</name>
    <name evidence="5" type="ORF">EMIHUDRAFT_114859</name>
</gene>
<accession>R1CW23</accession>
<name>ALMA7_EMIH1</name>
<feature type="chain" id="PRO_0000433894" description="Dimethylsulfoniopropionate lyase 7">
    <location>
        <begin position="1"/>
        <end position="341"/>
    </location>
</feature>
<feature type="region of interest" description="Disordered" evidence="2">
    <location>
        <begin position="1"/>
        <end position="24"/>
    </location>
</feature>
<feature type="region of interest" description="Disordered" evidence="2">
    <location>
        <begin position="319"/>
        <end position="341"/>
    </location>
</feature>
<feature type="compositionally biased region" description="Basic and acidic residues" evidence="2">
    <location>
        <begin position="1"/>
        <end position="10"/>
    </location>
</feature>
<feature type="compositionally biased region" description="Basic and acidic residues" evidence="2">
    <location>
        <begin position="319"/>
        <end position="328"/>
    </location>
</feature>
<organism>
    <name type="scientific">Emiliania huxleyi (strain CCMP1516)</name>
    <dbReference type="NCBI Taxonomy" id="280463"/>
    <lineage>
        <taxon>Eukaryota</taxon>
        <taxon>Haptista</taxon>
        <taxon>Haptophyta</taxon>
        <taxon>Prymnesiophyceae</taxon>
        <taxon>Isochrysidales</taxon>
        <taxon>Noelaerhabdaceae</taxon>
        <taxon>Emiliania</taxon>
    </lineage>
</organism>
<sequence length="341" mass="37530">MAGKDRKTIEKNYPGAEVDEGGRFKPLPPADDDAKLLVCEYPSLGVIRLDYDYPPALGDIDHPGSFYYDVFYRVVPGLTFGMCQKGEMPDEIKQRFIDAIKWLDAQGVAGITSDCGFFMNFQDLARTVTDKPVFMSSLCQLPAVVCAYAAHEHIALFTANGESLKPMRDLIKKECGVDPEESRFIIVGCQDVPGFEAVANGDRVDVDSVMPHIVRLAKETVAKYADTAKPIRAILFECTELPPYSDAVRAATRLPVFDAITSCNSFLAALMDNPRFGVNNWHLSWDGSQTDYRYGDNLSADLKAKLVNAEHAENVAAAERKLAKDRQKPKPATGTGTAFDA</sequence>